<name>CLPP_VIBCM</name>
<keyword id="KW-0963">Cytoplasm</keyword>
<keyword id="KW-0378">Hydrolase</keyword>
<keyword id="KW-0645">Protease</keyword>
<keyword id="KW-0720">Serine protease</keyword>
<feature type="chain" id="PRO_1000135172" description="ATP-dependent Clp protease proteolytic subunit">
    <location>
        <begin position="1"/>
        <end position="200"/>
    </location>
</feature>
<feature type="active site" description="Nucleophile" evidence="1">
    <location>
        <position position="103"/>
    </location>
</feature>
<feature type="active site" evidence="1">
    <location>
        <position position="128"/>
    </location>
</feature>
<dbReference type="EC" id="3.4.21.92" evidence="1"/>
<dbReference type="EMBL" id="CP001233">
    <property type="protein sequence ID" value="ACP06152.1"/>
    <property type="molecule type" value="Genomic_DNA"/>
</dbReference>
<dbReference type="SMR" id="C3LNM6"/>
<dbReference type="MEROPS" id="S14.001"/>
<dbReference type="KEGG" id="vcm:VCM66_1846"/>
<dbReference type="HOGENOM" id="CLU_058707_3_2_6"/>
<dbReference type="Proteomes" id="UP000001217">
    <property type="component" value="Chromosome I"/>
</dbReference>
<dbReference type="GO" id="GO:0005737">
    <property type="term" value="C:cytoplasm"/>
    <property type="evidence" value="ECO:0007669"/>
    <property type="project" value="UniProtKB-SubCell"/>
</dbReference>
<dbReference type="GO" id="GO:0009368">
    <property type="term" value="C:endopeptidase Clp complex"/>
    <property type="evidence" value="ECO:0007669"/>
    <property type="project" value="TreeGrafter"/>
</dbReference>
<dbReference type="GO" id="GO:0004176">
    <property type="term" value="F:ATP-dependent peptidase activity"/>
    <property type="evidence" value="ECO:0007669"/>
    <property type="project" value="InterPro"/>
</dbReference>
<dbReference type="GO" id="GO:0051117">
    <property type="term" value="F:ATPase binding"/>
    <property type="evidence" value="ECO:0007669"/>
    <property type="project" value="TreeGrafter"/>
</dbReference>
<dbReference type="GO" id="GO:0004252">
    <property type="term" value="F:serine-type endopeptidase activity"/>
    <property type="evidence" value="ECO:0007669"/>
    <property type="project" value="UniProtKB-UniRule"/>
</dbReference>
<dbReference type="GO" id="GO:0006515">
    <property type="term" value="P:protein quality control for misfolded or incompletely synthesized proteins"/>
    <property type="evidence" value="ECO:0007669"/>
    <property type="project" value="TreeGrafter"/>
</dbReference>
<dbReference type="CDD" id="cd07017">
    <property type="entry name" value="S14_ClpP_2"/>
    <property type="match status" value="1"/>
</dbReference>
<dbReference type="FunFam" id="3.90.226.10:FF:000001">
    <property type="entry name" value="ATP-dependent Clp protease proteolytic subunit"/>
    <property type="match status" value="1"/>
</dbReference>
<dbReference type="Gene3D" id="3.90.226.10">
    <property type="entry name" value="2-enoyl-CoA Hydratase, Chain A, domain 1"/>
    <property type="match status" value="1"/>
</dbReference>
<dbReference type="HAMAP" id="MF_00444">
    <property type="entry name" value="ClpP"/>
    <property type="match status" value="1"/>
</dbReference>
<dbReference type="InterPro" id="IPR001907">
    <property type="entry name" value="ClpP"/>
</dbReference>
<dbReference type="InterPro" id="IPR029045">
    <property type="entry name" value="ClpP/crotonase-like_dom_sf"/>
</dbReference>
<dbReference type="InterPro" id="IPR023562">
    <property type="entry name" value="ClpP/TepA"/>
</dbReference>
<dbReference type="InterPro" id="IPR033135">
    <property type="entry name" value="ClpP_His_AS"/>
</dbReference>
<dbReference type="InterPro" id="IPR018215">
    <property type="entry name" value="ClpP_Ser_AS"/>
</dbReference>
<dbReference type="NCBIfam" id="TIGR00493">
    <property type="entry name" value="clpP"/>
    <property type="match status" value="1"/>
</dbReference>
<dbReference type="NCBIfam" id="NF001368">
    <property type="entry name" value="PRK00277.1"/>
    <property type="match status" value="1"/>
</dbReference>
<dbReference type="NCBIfam" id="NF009205">
    <property type="entry name" value="PRK12553.1"/>
    <property type="match status" value="1"/>
</dbReference>
<dbReference type="PANTHER" id="PTHR10381">
    <property type="entry name" value="ATP-DEPENDENT CLP PROTEASE PROTEOLYTIC SUBUNIT"/>
    <property type="match status" value="1"/>
</dbReference>
<dbReference type="PANTHER" id="PTHR10381:SF70">
    <property type="entry name" value="ATP-DEPENDENT CLP PROTEASE PROTEOLYTIC SUBUNIT"/>
    <property type="match status" value="1"/>
</dbReference>
<dbReference type="Pfam" id="PF00574">
    <property type="entry name" value="CLP_protease"/>
    <property type="match status" value="1"/>
</dbReference>
<dbReference type="PRINTS" id="PR00127">
    <property type="entry name" value="CLPPROTEASEP"/>
</dbReference>
<dbReference type="SUPFAM" id="SSF52096">
    <property type="entry name" value="ClpP/crotonase"/>
    <property type="match status" value="1"/>
</dbReference>
<dbReference type="PROSITE" id="PS00382">
    <property type="entry name" value="CLP_PROTEASE_HIS"/>
    <property type="match status" value="1"/>
</dbReference>
<dbReference type="PROSITE" id="PS00381">
    <property type="entry name" value="CLP_PROTEASE_SER"/>
    <property type="match status" value="1"/>
</dbReference>
<evidence type="ECO:0000255" key="1">
    <source>
        <dbReference type="HAMAP-Rule" id="MF_00444"/>
    </source>
</evidence>
<proteinExistence type="inferred from homology"/>
<gene>
    <name evidence="1" type="primary">clpP</name>
    <name type="ordered locus">VCM66_1846</name>
</gene>
<sequence length="200" mass="22130">MSPIFDALVPMVVEQTSRGERSYDIYSRLLKERVIFLTGQVEDHMANLVVAQLLFLESENPDKDIFLYINSPGGSVTAGMSIYDTMQFIKPNVSTVCMGQACSMGAFLLAGGAPGKRYVLPNSRVMIHQPLGGFQGQASDIQIHAQEILTIKNKLNRLLAEHTGQPIEVIERDTDRDNFMSADQAVEYGLVDAVLKHRGE</sequence>
<comment type="function">
    <text evidence="1">Cleaves peptides in various proteins in a process that requires ATP hydrolysis. Has a chymotrypsin-like activity. Plays a major role in the degradation of misfolded proteins.</text>
</comment>
<comment type="catalytic activity">
    <reaction evidence="1">
        <text>Hydrolysis of proteins to small peptides in the presence of ATP and magnesium. alpha-casein is the usual test substrate. In the absence of ATP, only oligopeptides shorter than five residues are hydrolyzed (such as succinyl-Leu-Tyr-|-NHMec, and Leu-Tyr-Leu-|-Tyr-Trp, in which cleavage of the -Tyr-|-Leu- and -Tyr-|-Trp bonds also occurs).</text>
        <dbReference type="EC" id="3.4.21.92"/>
    </reaction>
</comment>
<comment type="subunit">
    <text evidence="1">Fourteen ClpP subunits assemble into 2 heptameric rings which stack back to back to give a disk-like structure with a central cavity, resembling the structure of eukaryotic proteasomes.</text>
</comment>
<comment type="subcellular location">
    <subcellularLocation>
        <location evidence="1">Cytoplasm</location>
    </subcellularLocation>
</comment>
<comment type="similarity">
    <text evidence="1">Belongs to the peptidase S14 family.</text>
</comment>
<organism>
    <name type="scientific">Vibrio cholerae serotype O1 (strain M66-2)</name>
    <dbReference type="NCBI Taxonomy" id="579112"/>
    <lineage>
        <taxon>Bacteria</taxon>
        <taxon>Pseudomonadati</taxon>
        <taxon>Pseudomonadota</taxon>
        <taxon>Gammaproteobacteria</taxon>
        <taxon>Vibrionales</taxon>
        <taxon>Vibrionaceae</taxon>
        <taxon>Vibrio</taxon>
    </lineage>
</organism>
<reference key="1">
    <citation type="journal article" date="2008" name="PLoS ONE">
        <title>A recalibrated molecular clock and independent origins for the cholera pandemic clones.</title>
        <authorList>
            <person name="Feng L."/>
            <person name="Reeves P.R."/>
            <person name="Lan R."/>
            <person name="Ren Y."/>
            <person name="Gao C."/>
            <person name="Zhou Z."/>
            <person name="Ren Y."/>
            <person name="Cheng J."/>
            <person name="Wang W."/>
            <person name="Wang J."/>
            <person name="Qian W."/>
            <person name="Li D."/>
            <person name="Wang L."/>
        </authorList>
    </citation>
    <scope>NUCLEOTIDE SEQUENCE [LARGE SCALE GENOMIC DNA]</scope>
    <source>
        <strain>M66-2</strain>
    </source>
</reference>
<protein>
    <recommendedName>
        <fullName evidence="1">ATP-dependent Clp protease proteolytic subunit</fullName>
        <ecNumber evidence="1">3.4.21.92</ecNumber>
    </recommendedName>
    <alternativeName>
        <fullName evidence="1">Endopeptidase Clp</fullName>
    </alternativeName>
</protein>
<accession>C3LNM6</accession>